<sequence>MAIKNLQNNNDLSELLVSVRRVTTVTKGGRRFSFSILVVVGDEKGRVGCGIGKHAEVAEARVKAVNAAKKSMIRVYLREGRTLHHDIKAKFCSGEIVLRTARAGTGIIAGGAIRSVFEVLGIKDVVAKSTRSNNPHNVICAVFKAFDSMLSPRQVASKRGKKISEIVGNR</sequence>
<name>RS5_WOLPM</name>
<comment type="function">
    <text evidence="1">With S4 and S12 plays an important role in translational accuracy.</text>
</comment>
<comment type="function">
    <text evidence="1">Located at the back of the 30S subunit body where it stabilizes the conformation of the head with respect to the body.</text>
</comment>
<comment type="subunit">
    <text evidence="1">Part of the 30S ribosomal subunit. Contacts proteins S4 and S8.</text>
</comment>
<comment type="domain">
    <text>The N-terminal domain interacts with the head of the 30S subunit; the C-terminal domain interacts with the body and contacts protein S4. The interaction surface between S4 and S5 is involved in control of translational fidelity.</text>
</comment>
<comment type="similarity">
    <text evidence="1">Belongs to the universal ribosomal protein uS5 family.</text>
</comment>
<accession>Q73HA3</accession>
<reference key="1">
    <citation type="journal article" date="2004" name="PLoS Biol.">
        <title>Phylogenomics of the reproductive parasite Wolbachia pipientis wMel: a streamlined genome overrun by mobile genetic elements.</title>
        <authorList>
            <person name="Wu M."/>
            <person name="Sun L.V."/>
            <person name="Vamathevan J.J."/>
            <person name="Riegler M."/>
            <person name="DeBoy R.T."/>
            <person name="Brownlie J.C."/>
            <person name="McGraw E.A."/>
            <person name="Martin W."/>
            <person name="Esser C."/>
            <person name="Ahmadinejad N."/>
            <person name="Wiegand C."/>
            <person name="Madupu R."/>
            <person name="Beanan M.J."/>
            <person name="Brinkac L.M."/>
            <person name="Daugherty S.C."/>
            <person name="Durkin A.S."/>
            <person name="Kolonay J.F."/>
            <person name="Nelson W.C."/>
            <person name="Mohamoud Y."/>
            <person name="Lee P."/>
            <person name="Berry K.J."/>
            <person name="Young M.B."/>
            <person name="Utterback T.R."/>
            <person name="Weidman J.F."/>
            <person name="Nierman W.C."/>
            <person name="Paulsen I.T."/>
            <person name="Nelson K.E."/>
            <person name="Tettelin H."/>
            <person name="O'Neill S.L."/>
            <person name="Eisen J.A."/>
        </authorList>
    </citation>
    <scope>NUCLEOTIDE SEQUENCE [LARGE SCALE GENOMIC DNA]</scope>
</reference>
<feature type="chain" id="PRO_0000293203" description="Small ribosomal subunit protein uS5">
    <location>
        <begin position="1"/>
        <end position="170"/>
    </location>
</feature>
<feature type="domain" description="S5 DRBM" evidence="1">
    <location>
        <begin position="12"/>
        <end position="75"/>
    </location>
</feature>
<dbReference type="EMBL" id="AE017196">
    <property type="protein sequence ID" value="AAS14362.1"/>
    <property type="molecule type" value="Genomic_DNA"/>
</dbReference>
<dbReference type="RefSeq" id="WP_010962748.1">
    <property type="nucleotide sequence ID" value="NZ_OX384529.1"/>
</dbReference>
<dbReference type="SMR" id="Q73HA3"/>
<dbReference type="EnsemblBacteria" id="AAS14362">
    <property type="protein sequence ID" value="AAS14362"/>
    <property type="gene ID" value="WD_0664"/>
</dbReference>
<dbReference type="GeneID" id="70036147"/>
<dbReference type="KEGG" id="wol:WD_0664"/>
<dbReference type="eggNOG" id="COG0098">
    <property type="taxonomic scope" value="Bacteria"/>
</dbReference>
<dbReference type="Proteomes" id="UP000008215">
    <property type="component" value="Chromosome"/>
</dbReference>
<dbReference type="GO" id="GO:0015935">
    <property type="term" value="C:small ribosomal subunit"/>
    <property type="evidence" value="ECO:0007669"/>
    <property type="project" value="InterPro"/>
</dbReference>
<dbReference type="GO" id="GO:0019843">
    <property type="term" value="F:rRNA binding"/>
    <property type="evidence" value="ECO:0007669"/>
    <property type="project" value="UniProtKB-UniRule"/>
</dbReference>
<dbReference type="GO" id="GO:0003735">
    <property type="term" value="F:structural constituent of ribosome"/>
    <property type="evidence" value="ECO:0007669"/>
    <property type="project" value="InterPro"/>
</dbReference>
<dbReference type="GO" id="GO:0006412">
    <property type="term" value="P:translation"/>
    <property type="evidence" value="ECO:0007669"/>
    <property type="project" value="UniProtKB-UniRule"/>
</dbReference>
<dbReference type="FunFam" id="3.30.230.10:FF:000002">
    <property type="entry name" value="30S ribosomal protein S5"/>
    <property type="match status" value="1"/>
</dbReference>
<dbReference type="Gene3D" id="3.30.160.20">
    <property type="match status" value="1"/>
</dbReference>
<dbReference type="Gene3D" id="3.30.230.10">
    <property type="match status" value="1"/>
</dbReference>
<dbReference type="HAMAP" id="MF_01307_B">
    <property type="entry name" value="Ribosomal_uS5_B"/>
    <property type="match status" value="1"/>
</dbReference>
<dbReference type="InterPro" id="IPR020568">
    <property type="entry name" value="Ribosomal_Su5_D2-typ_SF"/>
</dbReference>
<dbReference type="InterPro" id="IPR000851">
    <property type="entry name" value="Ribosomal_uS5"/>
</dbReference>
<dbReference type="InterPro" id="IPR005712">
    <property type="entry name" value="Ribosomal_uS5_bac-type"/>
</dbReference>
<dbReference type="InterPro" id="IPR005324">
    <property type="entry name" value="Ribosomal_uS5_C"/>
</dbReference>
<dbReference type="InterPro" id="IPR013810">
    <property type="entry name" value="Ribosomal_uS5_N"/>
</dbReference>
<dbReference type="InterPro" id="IPR018192">
    <property type="entry name" value="Ribosomal_uS5_N_CS"/>
</dbReference>
<dbReference type="InterPro" id="IPR014721">
    <property type="entry name" value="Ribsml_uS5_D2-typ_fold_subgr"/>
</dbReference>
<dbReference type="NCBIfam" id="TIGR01021">
    <property type="entry name" value="rpsE_bact"/>
    <property type="match status" value="1"/>
</dbReference>
<dbReference type="PANTHER" id="PTHR48277">
    <property type="entry name" value="MITOCHONDRIAL RIBOSOMAL PROTEIN S5"/>
    <property type="match status" value="1"/>
</dbReference>
<dbReference type="PANTHER" id="PTHR48277:SF1">
    <property type="entry name" value="MITOCHONDRIAL RIBOSOMAL PROTEIN S5"/>
    <property type="match status" value="1"/>
</dbReference>
<dbReference type="Pfam" id="PF00333">
    <property type="entry name" value="Ribosomal_S5"/>
    <property type="match status" value="1"/>
</dbReference>
<dbReference type="Pfam" id="PF03719">
    <property type="entry name" value="Ribosomal_S5_C"/>
    <property type="match status" value="1"/>
</dbReference>
<dbReference type="SUPFAM" id="SSF54768">
    <property type="entry name" value="dsRNA-binding domain-like"/>
    <property type="match status" value="1"/>
</dbReference>
<dbReference type="SUPFAM" id="SSF54211">
    <property type="entry name" value="Ribosomal protein S5 domain 2-like"/>
    <property type="match status" value="1"/>
</dbReference>
<dbReference type="PROSITE" id="PS00585">
    <property type="entry name" value="RIBOSOMAL_S5"/>
    <property type="match status" value="1"/>
</dbReference>
<dbReference type="PROSITE" id="PS50881">
    <property type="entry name" value="S5_DSRBD"/>
    <property type="match status" value="1"/>
</dbReference>
<proteinExistence type="inferred from homology"/>
<organism>
    <name type="scientific">Wolbachia pipientis wMel</name>
    <dbReference type="NCBI Taxonomy" id="163164"/>
    <lineage>
        <taxon>Bacteria</taxon>
        <taxon>Pseudomonadati</taxon>
        <taxon>Pseudomonadota</taxon>
        <taxon>Alphaproteobacteria</taxon>
        <taxon>Rickettsiales</taxon>
        <taxon>Anaplasmataceae</taxon>
        <taxon>Wolbachieae</taxon>
        <taxon>Wolbachia</taxon>
    </lineage>
</organism>
<gene>
    <name evidence="1" type="primary">rpsE</name>
    <name type="ordered locus">WD_0664</name>
</gene>
<protein>
    <recommendedName>
        <fullName evidence="1">Small ribosomal subunit protein uS5</fullName>
    </recommendedName>
    <alternativeName>
        <fullName evidence="2">30S ribosomal protein S5</fullName>
    </alternativeName>
</protein>
<keyword id="KW-0687">Ribonucleoprotein</keyword>
<keyword id="KW-0689">Ribosomal protein</keyword>
<keyword id="KW-0694">RNA-binding</keyword>
<keyword id="KW-0699">rRNA-binding</keyword>
<evidence type="ECO:0000255" key="1">
    <source>
        <dbReference type="HAMAP-Rule" id="MF_01307"/>
    </source>
</evidence>
<evidence type="ECO:0000305" key="2"/>